<reference key="1">
    <citation type="journal article" date="2002" name="Cytogenet. Genome Res.">
        <title>Identification of the human ortholog of the T-complex-encoded protein TCTE3 and evaluation as a candidate gene for primary ciliary dyskinesia.</title>
        <authorList>
            <person name="Neesen J."/>
            <person name="Drenckhahn J.-D."/>
            <person name="Tiede S."/>
            <person name="Burfeind P."/>
            <person name="Grzmil M."/>
            <person name="Konietzko J."/>
            <person name="Dixkens C."/>
            <person name="Kreutzberger J."/>
            <person name="Laccone F."/>
            <person name="Omran H."/>
        </authorList>
    </citation>
    <scope>NUCLEOTIDE SEQUENCE [MRNA]</scope>
    <scope>VARIANTS VAL-67 AND ILE-88</scope>
    <scope>TISSUE SPECIFICITY</scope>
    <scope>POSSIBLE FUNCTION IN AXONEMAL DYNEIN</scope>
</reference>
<reference key="2">
    <citation type="journal article" date="2003" name="Nature">
        <title>The DNA sequence and analysis of human chromosome 6.</title>
        <authorList>
            <person name="Mungall A.J."/>
            <person name="Palmer S.A."/>
            <person name="Sims S.K."/>
            <person name="Edwards C.A."/>
            <person name="Ashurst J.L."/>
            <person name="Wilming L."/>
            <person name="Jones M.C."/>
            <person name="Horton R."/>
            <person name="Hunt S.E."/>
            <person name="Scott C.E."/>
            <person name="Gilbert J.G.R."/>
            <person name="Clamp M.E."/>
            <person name="Bethel G."/>
            <person name="Milne S."/>
            <person name="Ainscough R."/>
            <person name="Almeida J.P."/>
            <person name="Ambrose K.D."/>
            <person name="Andrews T.D."/>
            <person name="Ashwell R.I.S."/>
            <person name="Babbage A.K."/>
            <person name="Bagguley C.L."/>
            <person name="Bailey J."/>
            <person name="Banerjee R."/>
            <person name="Barker D.J."/>
            <person name="Barlow K.F."/>
            <person name="Bates K."/>
            <person name="Beare D.M."/>
            <person name="Beasley H."/>
            <person name="Beasley O."/>
            <person name="Bird C.P."/>
            <person name="Blakey S.E."/>
            <person name="Bray-Allen S."/>
            <person name="Brook J."/>
            <person name="Brown A.J."/>
            <person name="Brown J.Y."/>
            <person name="Burford D.C."/>
            <person name="Burrill W."/>
            <person name="Burton J."/>
            <person name="Carder C."/>
            <person name="Carter N.P."/>
            <person name="Chapman J.C."/>
            <person name="Clark S.Y."/>
            <person name="Clark G."/>
            <person name="Clee C.M."/>
            <person name="Clegg S."/>
            <person name="Cobley V."/>
            <person name="Collier R.E."/>
            <person name="Collins J.E."/>
            <person name="Colman L.K."/>
            <person name="Corby N.R."/>
            <person name="Coville G.J."/>
            <person name="Culley K.M."/>
            <person name="Dhami P."/>
            <person name="Davies J."/>
            <person name="Dunn M."/>
            <person name="Earthrowl M.E."/>
            <person name="Ellington A.E."/>
            <person name="Evans K.A."/>
            <person name="Faulkner L."/>
            <person name="Francis M.D."/>
            <person name="Frankish A."/>
            <person name="Frankland J."/>
            <person name="French L."/>
            <person name="Garner P."/>
            <person name="Garnett J."/>
            <person name="Ghori M.J."/>
            <person name="Gilby L.M."/>
            <person name="Gillson C.J."/>
            <person name="Glithero R.J."/>
            <person name="Grafham D.V."/>
            <person name="Grant M."/>
            <person name="Gribble S."/>
            <person name="Griffiths C."/>
            <person name="Griffiths M.N.D."/>
            <person name="Hall R."/>
            <person name="Halls K.S."/>
            <person name="Hammond S."/>
            <person name="Harley J.L."/>
            <person name="Hart E.A."/>
            <person name="Heath P.D."/>
            <person name="Heathcott R."/>
            <person name="Holmes S.J."/>
            <person name="Howden P.J."/>
            <person name="Howe K.L."/>
            <person name="Howell G.R."/>
            <person name="Huckle E."/>
            <person name="Humphray S.J."/>
            <person name="Humphries M.D."/>
            <person name="Hunt A.R."/>
            <person name="Johnson C.M."/>
            <person name="Joy A.A."/>
            <person name="Kay M."/>
            <person name="Keenan S.J."/>
            <person name="Kimberley A.M."/>
            <person name="King A."/>
            <person name="Laird G.K."/>
            <person name="Langford C."/>
            <person name="Lawlor S."/>
            <person name="Leongamornlert D.A."/>
            <person name="Leversha M."/>
            <person name="Lloyd C.R."/>
            <person name="Lloyd D.M."/>
            <person name="Loveland J.E."/>
            <person name="Lovell J."/>
            <person name="Martin S."/>
            <person name="Mashreghi-Mohammadi M."/>
            <person name="Maslen G.L."/>
            <person name="Matthews L."/>
            <person name="McCann O.T."/>
            <person name="McLaren S.J."/>
            <person name="McLay K."/>
            <person name="McMurray A."/>
            <person name="Moore M.J.F."/>
            <person name="Mullikin J.C."/>
            <person name="Niblett D."/>
            <person name="Nickerson T."/>
            <person name="Novik K.L."/>
            <person name="Oliver K."/>
            <person name="Overton-Larty E.K."/>
            <person name="Parker A."/>
            <person name="Patel R."/>
            <person name="Pearce A.V."/>
            <person name="Peck A.I."/>
            <person name="Phillimore B.J.C.T."/>
            <person name="Phillips S."/>
            <person name="Plumb R.W."/>
            <person name="Porter K.M."/>
            <person name="Ramsey Y."/>
            <person name="Ranby S.A."/>
            <person name="Rice C.M."/>
            <person name="Ross M.T."/>
            <person name="Searle S.M."/>
            <person name="Sehra H.K."/>
            <person name="Sheridan E."/>
            <person name="Skuce C.D."/>
            <person name="Smith S."/>
            <person name="Smith M."/>
            <person name="Spraggon L."/>
            <person name="Squares S.L."/>
            <person name="Steward C.A."/>
            <person name="Sycamore N."/>
            <person name="Tamlyn-Hall G."/>
            <person name="Tester J."/>
            <person name="Theaker A.J."/>
            <person name="Thomas D.W."/>
            <person name="Thorpe A."/>
            <person name="Tracey A."/>
            <person name="Tromans A."/>
            <person name="Tubby B."/>
            <person name="Wall M."/>
            <person name="Wallis J.M."/>
            <person name="West A.P."/>
            <person name="White S.S."/>
            <person name="Whitehead S.L."/>
            <person name="Whittaker H."/>
            <person name="Wild A."/>
            <person name="Willey D.J."/>
            <person name="Wilmer T.E."/>
            <person name="Wood J.M."/>
            <person name="Wray P.W."/>
            <person name="Wyatt J.C."/>
            <person name="Young L."/>
            <person name="Younger R.M."/>
            <person name="Bentley D.R."/>
            <person name="Coulson A."/>
            <person name="Durbin R.M."/>
            <person name="Hubbard T."/>
            <person name="Sulston J.E."/>
            <person name="Dunham I."/>
            <person name="Rogers J."/>
            <person name="Beck S."/>
        </authorList>
    </citation>
    <scope>NUCLEOTIDE SEQUENCE [LARGE SCALE GENOMIC DNA]</scope>
</reference>
<reference key="3">
    <citation type="submission" date="2005-09" db="EMBL/GenBank/DDBJ databases">
        <authorList>
            <person name="Mural R.J."/>
            <person name="Istrail S."/>
            <person name="Sutton G.G."/>
            <person name="Florea L."/>
            <person name="Halpern A.L."/>
            <person name="Mobarry C.M."/>
            <person name="Lippert R."/>
            <person name="Walenz B."/>
            <person name="Shatkay H."/>
            <person name="Dew I."/>
            <person name="Miller J.R."/>
            <person name="Flanigan M.J."/>
            <person name="Edwards N.J."/>
            <person name="Bolanos R."/>
            <person name="Fasulo D."/>
            <person name="Halldorsson B.V."/>
            <person name="Hannenhalli S."/>
            <person name="Turner R."/>
            <person name="Yooseph S."/>
            <person name="Lu F."/>
            <person name="Nusskern D.R."/>
            <person name="Shue B.C."/>
            <person name="Zheng X.H."/>
            <person name="Zhong F."/>
            <person name="Delcher A.L."/>
            <person name="Huson D.H."/>
            <person name="Kravitz S.A."/>
            <person name="Mouchard L."/>
            <person name="Reinert K."/>
            <person name="Remington K.A."/>
            <person name="Clark A.G."/>
            <person name="Waterman M.S."/>
            <person name="Eichler E.E."/>
            <person name="Adams M.D."/>
            <person name="Hunkapiller M.W."/>
            <person name="Myers E.W."/>
            <person name="Venter J.C."/>
        </authorList>
    </citation>
    <scope>NUCLEOTIDE SEQUENCE [LARGE SCALE GENOMIC DNA]</scope>
</reference>
<reference key="4">
    <citation type="journal article" date="2004" name="Genome Res.">
        <title>The status, quality, and expansion of the NIH full-length cDNA project: the Mammalian Gene Collection (MGC).</title>
        <authorList>
            <consortium name="The MGC Project Team"/>
        </authorList>
    </citation>
    <scope>NUCLEOTIDE SEQUENCE [LARGE SCALE MRNA]</scope>
</reference>
<reference key="5">
    <citation type="journal article" date="2001" name="J. Biol. Chem.">
        <title>The Tctex1/Tctex2 class of dynein light chains. Dimerization, differential expression, and interaction with the LC8 protein family.</title>
        <authorList>
            <person name="DiBella L.M."/>
            <person name="Benashski S.E."/>
            <person name="Tedford H.W."/>
            <person name="Harrison A."/>
            <person name="Patel-King R.S."/>
            <person name="King S.M."/>
        </authorList>
    </citation>
    <scope>TISSUE SPECIFICITY</scope>
    <scope>POSSIBLE FUNCTION IN AXONEMAL DYNEIN AND CYTOPLASMIC DYNEIN 1</scope>
</reference>
<evidence type="ECO:0000250" key="1">
    <source>
        <dbReference type="UniProtKB" id="P11985"/>
    </source>
</evidence>
<evidence type="ECO:0000256" key="2">
    <source>
        <dbReference type="SAM" id="MobiDB-lite"/>
    </source>
</evidence>
<evidence type="ECO:0000269" key="3">
    <source>
    </source>
</evidence>
<evidence type="ECO:0000269" key="4">
    <source>
    </source>
</evidence>
<evidence type="ECO:0000305" key="5"/>
<evidence type="ECO:0000312" key="6">
    <source>
        <dbReference type="HGNC" id="HGNC:11695"/>
    </source>
</evidence>
<feature type="chain" id="PRO_0000328728" description="Dynein light chain Tctex-type protein 2">
    <location>
        <begin position="1"/>
        <end position="198"/>
    </location>
</feature>
<feature type="region of interest" description="Disordered" evidence="2">
    <location>
        <begin position="1"/>
        <end position="34"/>
    </location>
</feature>
<feature type="compositionally biased region" description="Polar residues" evidence="2">
    <location>
        <begin position="11"/>
        <end position="24"/>
    </location>
</feature>
<feature type="sequence variant" id="VAR_042499" description="In dbSNP:rs116980543." evidence="4">
    <original>I</original>
    <variation>V</variation>
    <location>
        <position position="67"/>
    </location>
</feature>
<feature type="sequence variant" id="VAR_042500" description="In dbSNP:rs2027063." evidence="4">
    <original>R</original>
    <variation>I</variation>
    <location>
        <position position="88"/>
    </location>
</feature>
<feature type="sequence variant" id="VAR_042501" description="In dbSNP:rs13194101.">
    <original>V</original>
    <variation>A</variation>
    <location>
        <position position="121"/>
    </location>
</feature>
<protein>
    <recommendedName>
        <fullName evidence="5">Dynein light chain Tctex-type protein 2</fullName>
    </recommendedName>
    <alternativeName>
        <fullName>T-complex testis-specific protein 3</fullName>
    </alternativeName>
    <alternativeName>
        <fullName>T-complex-associated testis-expressed protein 3</fullName>
        <shortName>Tcte-3</shortName>
    </alternativeName>
    <alternativeName>
        <fullName>Tctex1 domain-containing protein 3</fullName>
    </alternativeName>
</protein>
<accession>Q8IZS6</accession>
<keyword id="KW-0963">Cytoplasm</keyword>
<keyword id="KW-0206">Cytoskeleton</keyword>
<keyword id="KW-0243">Dynein</keyword>
<keyword id="KW-0472">Membrane</keyword>
<keyword id="KW-0493">Microtubule</keyword>
<keyword id="KW-0505">Motor protein</keyword>
<keyword id="KW-1267">Proteomics identification</keyword>
<keyword id="KW-1185">Reference proteome</keyword>
<keyword id="KW-0813">Transport</keyword>
<dbReference type="EMBL" id="AF519569">
    <property type="protein sequence ID" value="AAN34631.1"/>
    <property type="molecule type" value="mRNA"/>
</dbReference>
<dbReference type="EMBL" id="AL354892">
    <property type="status" value="NOT_ANNOTATED_CDS"/>
    <property type="molecule type" value="Genomic_DNA"/>
</dbReference>
<dbReference type="EMBL" id="CH471051">
    <property type="protein sequence ID" value="EAW47439.1"/>
    <property type="molecule type" value="Genomic_DNA"/>
</dbReference>
<dbReference type="EMBL" id="BC113639">
    <property type="protein sequence ID" value="AAI13640.1"/>
    <property type="molecule type" value="mRNA"/>
</dbReference>
<dbReference type="CCDS" id="CCDS5310.1"/>
<dbReference type="RefSeq" id="NP_777570.1">
    <property type="nucleotide sequence ID" value="NM_174910.3"/>
</dbReference>
<dbReference type="RefSeq" id="XP_011534395.1">
    <property type="nucleotide sequence ID" value="XM_011536093.4"/>
</dbReference>
<dbReference type="RefSeq" id="XP_054184657.1">
    <property type="nucleotide sequence ID" value="XM_054328682.1"/>
</dbReference>
<dbReference type="RefSeq" id="XP_054212252.1">
    <property type="nucleotide sequence ID" value="XM_054356277.1"/>
</dbReference>
<dbReference type="SMR" id="Q8IZS6"/>
<dbReference type="BioGRID" id="112851">
    <property type="interactions" value="3"/>
</dbReference>
<dbReference type="FunCoup" id="Q8IZS6">
    <property type="interactions" value="14"/>
</dbReference>
<dbReference type="IntAct" id="Q8IZS6">
    <property type="interactions" value="1"/>
</dbReference>
<dbReference type="STRING" id="9606.ENSP00000355736"/>
<dbReference type="GlyGen" id="Q8IZS6">
    <property type="glycosylation" value="1 site"/>
</dbReference>
<dbReference type="iPTMnet" id="Q8IZS6"/>
<dbReference type="PhosphoSitePlus" id="Q8IZS6"/>
<dbReference type="BioMuta" id="TCTE3"/>
<dbReference type="DMDM" id="74750798"/>
<dbReference type="jPOST" id="Q8IZS6"/>
<dbReference type="MassIVE" id="Q8IZS6"/>
<dbReference type="PaxDb" id="9606-ENSP00000355736"/>
<dbReference type="PeptideAtlas" id="Q8IZS6"/>
<dbReference type="ProteomicsDB" id="71419"/>
<dbReference type="Antibodypedia" id="33575">
    <property type="antibodies" value="27 antibodies from 16 providers"/>
</dbReference>
<dbReference type="DNASU" id="6991"/>
<dbReference type="Ensembl" id="ENST00000366774.4">
    <property type="protein sequence ID" value="ENSP00000355736.3"/>
    <property type="gene ID" value="ENSG00000184786.6"/>
</dbReference>
<dbReference type="Ensembl" id="ENST00000610291.2">
    <property type="protein sequence ID" value="ENSP00000478684.1"/>
    <property type="gene ID" value="ENSG00000275368.2"/>
</dbReference>
<dbReference type="GeneID" id="6991"/>
<dbReference type="KEGG" id="hsa:6991"/>
<dbReference type="MANE-Select" id="ENST00000366774.4">
    <property type="protein sequence ID" value="ENSP00000355736.3"/>
    <property type="RefSeq nucleotide sequence ID" value="NM_174910.3"/>
    <property type="RefSeq protein sequence ID" value="NP_777570.1"/>
</dbReference>
<dbReference type="UCSC" id="uc003qxe.2">
    <property type="organism name" value="human"/>
</dbReference>
<dbReference type="AGR" id="HGNC:11695"/>
<dbReference type="CTD" id="6991"/>
<dbReference type="DisGeNET" id="6991"/>
<dbReference type="GeneCards" id="DYNLT2"/>
<dbReference type="HGNC" id="HGNC:11695">
    <property type="gene designation" value="DYNLT2"/>
</dbReference>
<dbReference type="HPA" id="ENSG00000184786">
    <property type="expression patterns" value="Tissue enriched (testis)"/>
</dbReference>
<dbReference type="MIM" id="186977">
    <property type="type" value="gene"/>
</dbReference>
<dbReference type="neXtProt" id="NX_Q8IZS6"/>
<dbReference type="OpenTargets" id="ENSG00000184786"/>
<dbReference type="VEuPathDB" id="HostDB:ENSG00000184786"/>
<dbReference type="eggNOG" id="KOG4108">
    <property type="taxonomic scope" value="Eukaryota"/>
</dbReference>
<dbReference type="GeneTree" id="ENSGT00940000160069"/>
<dbReference type="HOGENOM" id="CLU_097204_0_0_1"/>
<dbReference type="InParanoid" id="Q8IZS6"/>
<dbReference type="OMA" id="KYSLHMA"/>
<dbReference type="OrthoDB" id="10248487at2759"/>
<dbReference type="PAN-GO" id="Q8IZS6">
    <property type="GO annotations" value="4 GO annotations based on evolutionary models"/>
</dbReference>
<dbReference type="PhylomeDB" id="Q8IZS6"/>
<dbReference type="TreeFam" id="TF313904"/>
<dbReference type="PathwayCommons" id="Q8IZS6"/>
<dbReference type="Reactome" id="R-HSA-5620924">
    <property type="pathway name" value="Intraflagellar transport"/>
</dbReference>
<dbReference type="SignaLink" id="Q8IZS6"/>
<dbReference type="BioGRID-ORCS" id="6991">
    <property type="hits" value="11 hits in 1147 CRISPR screens"/>
</dbReference>
<dbReference type="ChiTaRS" id="TCTE3">
    <property type="organism name" value="human"/>
</dbReference>
<dbReference type="GenomeRNAi" id="6991"/>
<dbReference type="Pharos" id="Q8IZS6">
    <property type="development level" value="Tdark"/>
</dbReference>
<dbReference type="PRO" id="PR:Q8IZS6"/>
<dbReference type="Proteomes" id="UP000005640">
    <property type="component" value="Chromosome 6"/>
</dbReference>
<dbReference type="RNAct" id="Q8IZS6">
    <property type="molecule type" value="protein"/>
</dbReference>
<dbReference type="Bgee" id="ENSG00000184786">
    <property type="expression patterns" value="Expressed in male germ line stem cell (sensu Vertebrata) in testis and 92 other cell types or tissues"/>
</dbReference>
<dbReference type="GO" id="GO:0005737">
    <property type="term" value="C:cytoplasm"/>
    <property type="evidence" value="ECO:0000318"/>
    <property type="project" value="GO_Central"/>
</dbReference>
<dbReference type="GO" id="GO:0005868">
    <property type="term" value="C:cytoplasmic dynein complex"/>
    <property type="evidence" value="ECO:0000318"/>
    <property type="project" value="GO_Central"/>
</dbReference>
<dbReference type="GO" id="GO:0016020">
    <property type="term" value="C:membrane"/>
    <property type="evidence" value="ECO:0007669"/>
    <property type="project" value="UniProtKB-SubCell"/>
</dbReference>
<dbReference type="GO" id="GO:0005874">
    <property type="term" value="C:microtubule"/>
    <property type="evidence" value="ECO:0007669"/>
    <property type="project" value="UniProtKB-KW"/>
</dbReference>
<dbReference type="GO" id="GO:0045505">
    <property type="term" value="F:dynein intermediate chain binding"/>
    <property type="evidence" value="ECO:0000318"/>
    <property type="project" value="GO_Central"/>
</dbReference>
<dbReference type="GO" id="GO:0007018">
    <property type="term" value="P:microtubule-based movement"/>
    <property type="evidence" value="ECO:0000318"/>
    <property type="project" value="GO_Central"/>
</dbReference>
<dbReference type="CDD" id="cd21460">
    <property type="entry name" value="DLC-like_TCTEX1D3"/>
    <property type="match status" value="1"/>
</dbReference>
<dbReference type="Gene3D" id="3.30.1140.40">
    <property type="entry name" value="Tctex-1"/>
    <property type="match status" value="1"/>
</dbReference>
<dbReference type="InterPro" id="IPR005334">
    <property type="entry name" value="Tctex-1-like"/>
</dbReference>
<dbReference type="InterPro" id="IPR038586">
    <property type="entry name" value="Tctex-1-like_sf"/>
</dbReference>
<dbReference type="PANTHER" id="PTHR21255:SF27">
    <property type="entry name" value="DYNEIN LIGHT CHAIN TCTEX-TYPE PROTEIN 2"/>
    <property type="match status" value="1"/>
</dbReference>
<dbReference type="PANTHER" id="PTHR21255">
    <property type="entry name" value="T-COMPLEX-ASSOCIATED-TESTIS-EXPRESSED 1/ DYNEIN LIGHT CHAIN"/>
    <property type="match status" value="1"/>
</dbReference>
<dbReference type="Pfam" id="PF03645">
    <property type="entry name" value="Tctex-1"/>
    <property type="match status" value="1"/>
</dbReference>
<gene>
    <name evidence="6" type="primary">DYNLT2</name>
    <name type="synonym">TCTE3</name>
    <name type="synonym">TCTEX1D3</name>
</gene>
<organism>
    <name type="scientific">Homo sapiens</name>
    <name type="common">Human</name>
    <dbReference type="NCBI Taxonomy" id="9606"/>
    <lineage>
        <taxon>Eukaryota</taxon>
        <taxon>Metazoa</taxon>
        <taxon>Chordata</taxon>
        <taxon>Craniata</taxon>
        <taxon>Vertebrata</taxon>
        <taxon>Euteleostomi</taxon>
        <taxon>Mammalia</taxon>
        <taxon>Eutheria</taxon>
        <taxon>Euarchontoglires</taxon>
        <taxon>Primates</taxon>
        <taxon>Haplorrhini</taxon>
        <taxon>Catarrhini</taxon>
        <taxon>Hominidae</taxon>
        <taxon>Homo</taxon>
    </lineage>
</organism>
<sequence>MEKRGRGVKSSPIQTPNQTPQQAPVTPRKERRPSMFEKEAYTQILRERLRESIHNVQYVEPPFDDSIADIGKEWKSALAKLKFANSYRMEPLKKFQAHSVETKVQQILTESLKDVKYDDKVFSHLSLELADRILLAVKEFGYHRYKFIIKVLFIQKTGQAINIASRWIWDIAWDSWVAAKHEAESYVALVLVFALYYE</sequence>
<name>DYLT2_HUMAN</name>
<comment type="function">
    <text evidence="1 3 4">May be an accessory component of axonemal dynein and cytoplasmic dynein 1 (PubMed:11278908, PubMed:12584439). Candidate for involvement in male sterility (By similarity).</text>
</comment>
<comment type="subunit">
    <text evidence="1">Interacts with CCDC159 (By similarity). Interacts with CSNK2B (By similarity).</text>
</comment>
<comment type="interaction">
    <interactant intactId="EBI-22730131">
        <id>Q8IZS6</id>
    </interactant>
    <interactant intactId="EBI-10303987">
        <id>Q9UHG0</id>
        <label>DCDC2</label>
    </interactant>
    <organismsDiffer>false</organismsDiffer>
    <experiments>3</experiments>
</comment>
<comment type="subcellular location">
    <subcellularLocation>
        <location evidence="1">Cytoplasm</location>
        <location evidence="1">Cytoskeleton</location>
    </subcellularLocation>
    <subcellularLocation>
        <location evidence="1">Cytoplasmic granule</location>
    </subcellularLocation>
    <subcellularLocation>
        <location evidence="1">Membrane</location>
        <topology evidence="1">Peripheral membrane protein</topology>
    </subcellularLocation>
    <text evidence="1">Found on the surface of sperm tail. Stored in cytoplasmic granules during spermatogenesis.</text>
</comment>
<comment type="tissue specificity">
    <text evidence="3 4">Expressed predominantly in testis. Also expressed in brain, lung and trachea.</text>
</comment>
<comment type="similarity">
    <text evidence="5">Belongs to the dynein light chain Tctex-type family.</text>
</comment>
<proteinExistence type="evidence at protein level"/>